<sequence length="89" mass="10145">MSKKCALTGRKPRRGYSYAIRGISKKKKGIGLKVTGRTKRRFFPNMMTKRLWSTEENRFLKLKISAAALRLVDKLGLDQVVARAKSKGF</sequence>
<dbReference type="EMBL" id="AM884177">
    <property type="protein sequence ID" value="CAP06735.1"/>
    <property type="molecule type" value="Genomic_DNA"/>
</dbReference>
<dbReference type="RefSeq" id="WP_009871434.1">
    <property type="nucleotide sequence ID" value="NC_010280.2"/>
</dbReference>
<dbReference type="SMR" id="B0BB73"/>
<dbReference type="KEGG" id="ctl:CTLon_0337"/>
<dbReference type="HOGENOM" id="CLU_064548_3_2_0"/>
<dbReference type="Proteomes" id="UP001154401">
    <property type="component" value="Chromosome"/>
</dbReference>
<dbReference type="GO" id="GO:1990904">
    <property type="term" value="C:ribonucleoprotein complex"/>
    <property type="evidence" value="ECO:0007669"/>
    <property type="project" value="UniProtKB-KW"/>
</dbReference>
<dbReference type="GO" id="GO:0005840">
    <property type="term" value="C:ribosome"/>
    <property type="evidence" value="ECO:0007669"/>
    <property type="project" value="UniProtKB-KW"/>
</dbReference>
<dbReference type="GO" id="GO:0003735">
    <property type="term" value="F:structural constituent of ribosome"/>
    <property type="evidence" value="ECO:0007669"/>
    <property type="project" value="InterPro"/>
</dbReference>
<dbReference type="GO" id="GO:0006412">
    <property type="term" value="P:translation"/>
    <property type="evidence" value="ECO:0007669"/>
    <property type="project" value="UniProtKB-UniRule"/>
</dbReference>
<dbReference type="FunFam" id="2.30.170.40:FF:000010">
    <property type="entry name" value="50S ribosomal protein L28"/>
    <property type="match status" value="1"/>
</dbReference>
<dbReference type="Gene3D" id="2.30.170.40">
    <property type="entry name" value="Ribosomal protein L28/L24"/>
    <property type="match status" value="1"/>
</dbReference>
<dbReference type="HAMAP" id="MF_00373">
    <property type="entry name" value="Ribosomal_bL28"/>
    <property type="match status" value="1"/>
</dbReference>
<dbReference type="InterPro" id="IPR026569">
    <property type="entry name" value="Ribosomal_bL28"/>
</dbReference>
<dbReference type="InterPro" id="IPR034704">
    <property type="entry name" value="Ribosomal_bL28/bL31-like_sf"/>
</dbReference>
<dbReference type="InterPro" id="IPR001383">
    <property type="entry name" value="Ribosomal_bL28_bact-type"/>
</dbReference>
<dbReference type="InterPro" id="IPR037147">
    <property type="entry name" value="Ribosomal_bL28_sf"/>
</dbReference>
<dbReference type="NCBIfam" id="TIGR00009">
    <property type="entry name" value="L28"/>
    <property type="match status" value="1"/>
</dbReference>
<dbReference type="PANTHER" id="PTHR13528">
    <property type="entry name" value="39S RIBOSOMAL PROTEIN L28, MITOCHONDRIAL"/>
    <property type="match status" value="1"/>
</dbReference>
<dbReference type="PANTHER" id="PTHR13528:SF2">
    <property type="entry name" value="LARGE RIBOSOMAL SUBUNIT PROTEIN BL28M"/>
    <property type="match status" value="1"/>
</dbReference>
<dbReference type="Pfam" id="PF00830">
    <property type="entry name" value="Ribosomal_L28"/>
    <property type="match status" value="1"/>
</dbReference>
<dbReference type="SUPFAM" id="SSF143800">
    <property type="entry name" value="L28p-like"/>
    <property type="match status" value="1"/>
</dbReference>
<accession>B0BB73</accession>
<feature type="chain" id="PRO_1000121606" description="Large ribosomal subunit protein bL28">
    <location>
        <begin position="1"/>
        <end position="89"/>
    </location>
</feature>
<protein>
    <recommendedName>
        <fullName evidence="1">Large ribosomal subunit protein bL28</fullName>
    </recommendedName>
    <alternativeName>
        <fullName evidence="2">50S ribosomal protein L28</fullName>
    </alternativeName>
</protein>
<organism>
    <name type="scientific">Chlamydia trachomatis serovar L2b (strain UCH-1/proctitis)</name>
    <dbReference type="NCBI Taxonomy" id="471473"/>
    <lineage>
        <taxon>Bacteria</taxon>
        <taxon>Pseudomonadati</taxon>
        <taxon>Chlamydiota</taxon>
        <taxon>Chlamydiia</taxon>
        <taxon>Chlamydiales</taxon>
        <taxon>Chlamydiaceae</taxon>
        <taxon>Chlamydia/Chlamydophila group</taxon>
        <taxon>Chlamydia</taxon>
    </lineage>
</organism>
<proteinExistence type="inferred from homology"/>
<reference key="1">
    <citation type="journal article" date="2008" name="Genome Res.">
        <title>Chlamydia trachomatis: genome sequence analysis of lymphogranuloma venereum isolates.</title>
        <authorList>
            <person name="Thomson N.R."/>
            <person name="Holden M.T.G."/>
            <person name="Carder C."/>
            <person name="Lennard N."/>
            <person name="Lockey S.J."/>
            <person name="Marsh P."/>
            <person name="Skipp P."/>
            <person name="O'Connor C.D."/>
            <person name="Goodhead I."/>
            <person name="Norbertzcak H."/>
            <person name="Harris B."/>
            <person name="Ormond D."/>
            <person name="Rance R."/>
            <person name="Quail M.A."/>
            <person name="Parkhill J."/>
            <person name="Stephens R.S."/>
            <person name="Clarke I.N."/>
        </authorList>
    </citation>
    <scope>NUCLEOTIDE SEQUENCE [LARGE SCALE GENOMIC DNA]</scope>
    <source>
        <strain>UCH-1/proctitis</strain>
    </source>
</reference>
<name>RL28_CHLTB</name>
<comment type="similarity">
    <text evidence="1">Belongs to the bacterial ribosomal protein bL28 family.</text>
</comment>
<evidence type="ECO:0000255" key="1">
    <source>
        <dbReference type="HAMAP-Rule" id="MF_00373"/>
    </source>
</evidence>
<evidence type="ECO:0000305" key="2"/>
<gene>
    <name evidence="1" type="primary">rpmB</name>
    <name type="ordered locus">CTLon_0337</name>
</gene>
<keyword id="KW-0687">Ribonucleoprotein</keyword>
<keyword id="KW-0689">Ribosomal protein</keyword>